<accession>Q54QC8</accession>
<gene>
    <name type="primary">sec1</name>
    <name type="synonym">sec1A</name>
    <name type="ORF">DDB_G0283937</name>
</gene>
<sequence>MATSLRELCKDRILNEMVRTITPEASNGWKALIVDQDSLRVISACCGMFDIMEEKVTVVEKIDNPRQRLPNLEAIYFLTPTAQSIDLLINDFKKKSSPHYLAIHLFLTSKLPEVEFKKLSASLAVHRIKTFKEINLEFLAIESQAFHLDQNNTLFQLFSPDSIDPTEEQAKIATRLVSLCVSLNECPIIRFSRSHPVSAMIAGFTQEKLDNVMRTVKSFKPNDDRSTLLILDRTQDPLAPLIHEFSYQAMVYDLFDIENDKFSFDTVTNAGATLKKDVLLGETDYMWSGLRHQHIADVSTNLTTRLDEFLKTNQVSQYGQHTGSLKEAGEVVRSLPQYQEMMGKYSVHINLADRASAKFPELEQLAYLEQDLATGEDANGNSPKNVTGRLSNYLSDFSAEKYNKIRLLMMYIISQDGIKEEDRRRLMEMAGISQSEQNAFTNLRYLGVTLMKGAKGKKPISPPKNRKSESGNVPYEVSRYVPVVKDIAENIINETLPSTDFPFVKEEPIARATNAPVSKVSLKGKSKQPRWADPNVQVEETKYSGSKLIIFVIGGMTFSEMRSIYELSSHYKKNIYIGSTNILLPKKYIDQLLTLKNE</sequence>
<name>SEC1_DICDI</name>
<comment type="function">
    <text evidence="1">Involved in the vesicle trafficking. Binds syntaxins (By similarity).</text>
</comment>
<comment type="disruption phenotype">
    <text evidence="2">Defects in locomotion.</text>
</comment>
<comment type="similarity">
    <text evidence="3">Belongs to the STXBP/unc-18/SEC1 family.</text>
</comment>
<feature type="chain" id="PRO_0000351219" description="Protein transport protein sec1">
    <location>
        <begin position="1"/>
        <end position="598"/>
    </location>
</feature>
<organism>
    <name type="scientific">Dictyostelium discoideum</name>
    <name type="common">Social amoeba</name>
    <dbReference type="NCBI Taxonomy" id="44689"/>
    <lineage>
        <taxon>Eukaryota</taxon>
        <taxon>Amoebozoa</taxon>
        <taxon>Evosea</taxon>
        <taxon>Eumycetozoa</taxon>
        <taxon>Dictyostelia</taxon>
        <taxon>Dictyosteliales</taxon>
        <taxon>Dictyosteliaceae</taxon>
        <taxon>Dictyostelium</taxon>
    </lineage>
</organism>
<evidence type="ECO:0000250" key="1"/>
<evidence type="ECO:0000269" key="2">
    <source>
    </source>
</evidence>
<evidence type="ECO:0000305" key="3"/>
<reference key="1">
    <citation type="journal article" date="2005" name="Nature">
        <title>The genome of the social amoeba Dictyostelium discoideum.</title>
        <authorList>
            <person name="Eichinger L."/>
            <person name="Pachebat J.A."/>
            <person name="Gloeckner G."/>
            <person name="Rajandream M.A."/>
            <person name="Sucgang R."/>
            <person name="Berriman M."/>
            <person name="Song J."/>
            <person name="Olsen R."/>
            <person name="Szafranski K."/>
            <person name="Xu Q."/>
            <person name="Tunggal B."/>
            <person name="Kummerfeld S."/>
            <person name="Madera M."/>
            <person name="Konfortov B.A."/>
            <person name="Rivero F."/>
            <person name="Bankier A.T."/>
            <person name="Lehmann R."/>
            <person name="Hamlin N."/>
            <person name="Davies R."/>
            <person name="Gaudet P."/>
            <person name="Fey P."/>
            <person name="Pilcher K."/>
            <person name="Chen G."/>
            <person name="Saunders D."/>
            <person name="Sodergren E.J."/>
            <person name="Davis P."/>
            <person name="Kerhornou A."/>
            <person name="Nie X."/>
            <person name="Hall N."/>
            <person name="Anjard C."/>
            <person name="Hemphill L."/>
            <person name="Bason N."/>
            <person name="Farbrother P."/>
            <person name="Desany B."/>
            <person name="Just E."/>
            <person name="Morio T."/>
            <person name="Rost R."/>
            <person name="Churcher C.M."/>
            <person name="Cooper J."/>
            <person name="Haydock S."/>
            <person name="van Driessche N."/>
            <person name="Cronin A."/>
            <person name="Goodhead I."/>
            <person name="Muzny D.M."/>
            <person name="Mourier T."/>
            <person name="Pain A."/>
            <person name="Lu M."/>
            <person name="Harper D."/>
            <person name="Lindsay R."/>
            <person name="Hauser H."/>
            <person name="James K.D."/>
            <person name="Quiles M."/>
            <person name="Madan Babu M."/>
            <person name="Saito T."/>
            <person name="Buchrieser C."/>
            <person name="Wardroper A."/>
            <person name="Felder M."/>
            <person name="Thangavelu M."/>
            <person name="Johnson D."/>
            <person name="Knights A."/>
            <person name="Loulseged H."/>
            <person name="Mungall K.L."/>
            <person name="Oliver K."/>
            <person name="Price C."/>
            <person name="Quail M.A."/>
            <person name="Urushihara H."/>
            <person name="Hernandez J."/>
            <person name="Rabbinowitsch E."/>
            <person name="Steffen D."/>
            <person name="Sanders M."/>
            <person name="Ma J."/>
            <person name="Kohara Y."/>
            <person name="Sharp S."/>
            <person name="Simmonds M.N."/>
            <person name="Spiegler S."/>
            <person name="Tivey A."/>
            <person name="Sugano S."/>
            <person name="White B."/>
            <person name="Walker D."/>
            <person name="Woodward J.R."/>
            <person name="Winckler T."/>
            <person name="Tanaka Y."/>
            <person name="Shaulsky G."/>
            <person name="Schleicher M."/>
            <person name="Weinstock G.M."/>
            <person name="Rosenthal A."/>
            <person name="Cox E.C."/>
            <person name="Chisholm R.L."/>
            <person name="Gibbs R.A."/>
            <person name="Loomis W.F."/>
            <person name="Platzer M."/>
            <person name="Kay R.R."/>
            <person name="Williams J.G."/>
            <person name="Dear P.H."/>
            <person name="Noegel A.A."/>
            <person name="Barrell B.G."/>
            <person name="Kuspa A."/>
        </authorList>
    </citation>
    <scope>NUCLEOTIDE SEQUENCE [LARGE SCALE GENOMIC DNA]</scope>
    <source>
        <strain>AX4</strain>
    </source>
</reference>
<reference key="2">
    <citation type="journal article" date="2007" name="PLoS ONE">
        <title>Using single loxP sites to enhance homologous recombination: ts mutants in Sec1 of Dictyostelium discoideum.</title>
        <authorList>
            <person name="Bretscher M.S."/>
            <person name="Clotworthy M."/>
        </authorList>
    </citation>
    <scope>DISRUPTION PHENOTYPE</scope>
</reference>
<dbReference type="EMBL" id="AAFI02000058">
    <property type="protein sequence ID" value="EAL65456.1"/>
    <property type="molecule type" value="Genomic_DNA"/>
</dbReference>
<dbReference type="RefSeq" id="XP_638816.1">
    <property type="nucleotide sequence ID" value="XM_633724.1"/>
</dbReference>
<dbReference type="SMR" id="Q54QC8"/>
<dbReference type="FunCoup" id="Q54QC8">
    <property type="interactions" value="529"/>
</dbReference>
<dbReference type="STRING" id="44689.Q54QC8"/>
<dbReference type="PaxDb" id="44689-DDB0231656"/>
<dbReference type="EnsemblProtists" id="EAL65456">
    <property type="protein sequence ID" value="EAL65456"/>
    <property type="gene ID" value="DDB_G0283937"/>
</dbReference>
<dbReference type="GeneID" id="8624340"/>
<dbReference type="KEGG" id="ddi:DDB_G0283937"/>
<dbReference type="dictyBase" id="DDB_G0283937">
    <property type="gene designation" value="sec1"/>
</dbReference>
<dbReference type="VEuPathDB" id="AmoebaDB:DDB_G0283937"/>
<dbReference type="eggNOG" id="KOG1300">
    <property type="taxonomic scope" value="Eukaryota"/>
</dbReference>
<dbReference type="HOGENOM" id="CLU_009210_2_0_1"/>
<dbReference type="InParanoid" id="Q54QC8"/>
<dbReference type="OMA" id="PFTRPHT"/>
<dbReference type="PhylomeDB" id="Q54QC8"/>
<dbReference type="Reactome" id="R-DDI-114516">
    <property type="pathway name" value="Disinhibition of SNARE formation"/>
</dbReference>
<dbReference type="Reactome" id="R-DDI-114608">
    <property type="pathway name" value="Platelet degranulation"/>
</dbReference>
<dbReference type="Reactome" id="R-DDI-449836">
    <property type="pathway name" value="Other interleukin signaling"/>
</dbReference>
<dbReference type="PRO" id="PR:Q54QC8"/>
<dbReference type="Proteomes" id="UP000002195">
    <property type="component" value="Chromosome 4"/>
</dbReference>
<dbReference type="GO" id="GO:0005886">
    <property type="term" value="C:plasma membrane"/>
    <property type="evidence" value="ECO:0000314"/>
    <property type="project" value="dictyBase"/>
</dbReference>
<dbReference type="GO" id="GO:0030141">
    <property type="term" value="C:secretory granule"/>
    <property type="evidence" value="ECO:0000318"/>
    <property type="project" value="GO_Central"/>
</dbReference>
<dbReference type="GO" id="GO:0019905">
    <property type="term" value="F:syntaxin binding"/>
    <property type="evidence" value="ECO:0000318"/>
    <property type="project" value="GO_Central"/>
</dbReference>
<dbReference type="GO" id="GO:0048870">
    <property type="term" value="P:cell motility"/>
    <property type="evidence" value="ECO:0000315"/>
    <property type="project" value="dictyBase"/>
</dbReference>
<dbReference type="GO" id="GO:0071470">
    <property type="term" value="P:cellular response to osmotic stress"/>
    <property type="evidence" value="ECO:0000315"/>
    <property type="project" value="dictyBase"/>
</dbReference>
<dbReference type="GO" id="GO:0070177">
    <property type="term" value="P:contractile vacuole discharge"/>
    <property type="evidence" value="ECO:0000315"/>
    <property type="project" value="dictyBase"/>
</dbReference>
<dbReference type="GO" id="GO:0006971">
    <property type="term" value="P:hypotonic response"/>
    <property type="evidence" value="ECO:0007007"/>
    <property type="project" value="dictyBase"/>
</dbReference>
<dbReference type="GO" id="GO:0006886">
    <property type="term" value="P:intracellular protein transport"/>
    <property type="evidence" value="ECO:0000318"/>
    <property type="project" value="GO_Central"/>
</dbReference>
<dbReference type="GO" id="GO:0007009">
    <property type="term" value="P:plasma membrane organization"/>
    <property type="evidence" value="ECO:0000315"/>
    <property type="project" value="dictyBase"/>
</dbReference>
<dbReference type="GO" id="GO:0006904">
    <property type="term" value="P:vesicle docking involved in exocytosis"/>
    <property type="evidence" value="ECO:0000315"/>
    <property type="project" value="dictyBase"/>
</dbReference>
<dbReference type="GO" id="GO:0016192">
    <property type="term" value="P:vesicle-mediated transport"/>
    <property type="evidence" value="ECO:0000318"/>
    <property type="project" value="GO_Central"/>
</dbReference>
<dbReference type="FunFam" id="3.40.50.2060:FF:000001">
    <property type="entry name" value="syntaxin-binding protein 1 isoform X2"/>
    <property type="match status" value="1"/>
</dbReference>
<dbReference type="Gene3D" id="1.25.40.60">
    <property type="match status" value="1"/>
</dbReference>
<dbReference type="Gene3D" id="3.40.50.1910">
    <property type="match status" value="1"/>
</dbReference>
<dbReference type="Gene3D" id="3.40.50.2060">
    <property type="match status" value="1"/>
</dbReference>
<dbReference type="Gene3D" id="3.90.830.10">
    <property type="entry name" value="Syntaxin Binding Protein 1, Chain A, domain 2"/>
    <property type="match status" value="1"/>
</dbReference>
<dbReference type="InterPro" id="IPR043154">
    <property type="entry name" value="Sec-1-like_dom1"/>
</dbReference>
<dbReference type="InterPro" id="IPR043127">
    <property type="entry name" value="Sec-1-like_dom3a"/>
</dbReference>
<dbReference type="InterPro" id="IPR001619">
    <property type="entry name" value="Sec1-like"/>
</dbReference>
<dbReference type="InterPro" id="IPR027482">
    <property type="entry name" value="Sec1-like_dom2"/>
</dbReference>
<dbReference type="InterPro" id="IPR036045">
    <property type="entry name" value="Sec1-like_sf"/>
</dbReference>
<dbReference type="PANTHER" id="PTHR11679">
    <property type="entry name" value="VESICLE PROTEIN SORTING-ASSOCIATED"/>
    <property type="match status" value="1"/>
</dbReference>
<dbReference type="Pfam" id="PF00995">
    <property type="entry name" value="Sec1"/>
    <property type="match status" value="1"/>
</dbReference>
<dbReference type="PIRSF" id="PIRSF005715">
    <property type="entry name" value="VPS45_Sec1"/>
    <property type="match status" value="1"/>
</dbReference>
<dbReference type="SUPFAM" id="SSF56815">
    <property type="entry name" value="Sec1/munc18-like (SM) proteins"/>
    <property type="match status" value="1"/>
</dbReference>
<proteinExistence type="inferred from homology"/>
<keyword id="KW-0653">Protein transport</keyword>
<keyword id="KW-1185">Reference proteome</keyword>
<keyword id="KW-0813">Transport</keyword>
<protein>
    <recommendedName>
        <fullName>Protein transport protein sec1</fullName>
    </recommendedName>
</protein>